<organism>
    <name type="scientific">Xylella fastidiosa (strain 9a5c)</name>
    <dbReference type="NCBI Taxonomy" id="160492"/>
    <lineage>
        <taxon>Bacteria</taxon>
        <taxon>Pseudomonadati</taxon>
        <taxon>Pseudomonadota</taxon>
        <taxon>Gammaproteobacteria</taxon>
        <taxon>Lysobacterales</taxon>
        <taxon>Lysobacteraceae</taxon>
        <taxon>Xylella</taxon>
    </lineage>
</organism>
<gene>
    <name evidence="1" type="primary">pepA</name>
    <name type="ordered locus">XF_0138</name>
</gene>
<protein>
    <recommendedName>
        <fullName evidence="1">Probable cytosol aminopeptidase</fullName>
        <ecNumber evidence="1">3.4.11.1</ecNumber>
    </recommendedName>
    <alternativeName>
        <fullName evidence="1">Leucine aminopeptidase</fullName>
        <shortName evidence="1">LAP</shortName>
        <ecNumber evidence="1">3.4.11.10</ecNumber>
    </alternativeName>
    <alternativeName>
        <fullName evidence="1">Leucyl aminopeptidase</fullName>
    </alternativeName>
</protein>
<feature type="chain" id="PRO_0000165818" description="Probable cytosol aminopeptidase">
    <location>
        <begin position="1"/>
        <end position="491"/>
    </location>
</feature>
<feature type="active site" evidence="1">
    <location>
        <position position="276"/>
    </location>
</feature>
<feature type="active site" evidence="1">
    <location>
        <position position="350"/>
    </location>
</feature>
<feature type="binding site" evidence="1">
    <location>
        <position position="264"/>
    </location>
    <ligand>
        <name>Mn(2+)</name>
        <dbReference type="ChEBI" id="CHEBI:29035"/>
        <label>2</label>
    </ligand>
</feature>
<feature type="binding site" evidence="1">
    <location>
        <position position="269"/>
    </location>
    <ligand>
        <name>Mn(2+)</name>
        <dbReference type="ChEBI" id="CHEBI:29035"/>
        <label>1</label>
    </ligand>
</feature>
<feature type="binding site" evidence="1">
    <location>
        <position position="269"/>
    </location>
    <ligand>
        <name>Mn(2+)</name>
        <dbReference type="ChEBI" id="CHEBI:29035"/>
        <label>2</label>
    </ligand>
</feature>
<feature type="binding site" evidence="1">
    <location>
        <position position="287"/>
    </location>
    <ligand>
        <name>Mn(2+)</name>
        <dbReference type="ChEBI" id="CHEBI:29035"/>
        <label>2</label>
    </ligand>
</feature>
<feature type="binding site" evidence="1">
    <location>
        <position position="346"/>
    </location>
    <ligand>
        <name>Mn(2+)</name>
        <dbReference type="ChEBI" id="CHEBI:29035"/>
        <label>1</label>
    </ligand>
</feature>
<feature type="binding site" evidence="1">
    <location>
        <position position="348"/>
    </location>
    <ligand>
        <name>Mn(2+)</name>
        <dbReference type="ChEBI" id="CHEBI:29035"/>
        <label>1</label>
    </ligand>
</feature>
<feature type="binding site" evidence="1">
    <location>
        <position position="348"/>
    </location>
    <ligand>
        <name>Mn(2+)</name>
        <dbReference type="ChEBI" id="CHEBI:29035"/>
        <label>2</label>
    </ligand>
</feature>
<name>AMPA_XYLFA</name>
<proteinExistence type="inferred from homology"/>
<keyword id="KW-0031">Aminopeptidase</keyword>
<keyword id="KW-0963">Cytoplasm</keyword>
<keyword id="KW-0378">Hydrolase</keyword>
<keyword id="KW-0464">Manganese</keyword>
<keyword id="KW-0479">Metal-binding</keyword>
<keyword id="KW-0645">Protease</keyword>
<dbReference type="EC" id="3.4.11.1" evidence="1"/>
<dbReference type="EC" id="3.4.11.10" evidence="1"/>
<dbReference type="EMBL" id="AE003849">
    <property type="protein sequence ID" value="AAF82951.1"/>
    <property type="molecule type" value="Genomic_DNA"/>
</dbReference>
<dbReference type="PIR" id="F82843">
    <property type="entry name" value="F82843"/>
</dbReference>
<dbReference type="RefSeq" id="WP_010892683.1">
    <property type="nucleotide sequence ID" value="NC_002488.3"/>
</dbReference>
<dbReference type="SMR" id="Q9PH08"/>
<dbReference type="STRING" id="160492.XF_0138"/>
<dbReference type="MEROPS" id="M17.003"/>
<dbReference type="KEGG" id="xfa:XF_0138"/>
<dbReference type="eggNOG" id="COG0260">
    <property type="taxonomic scope" value="Bacteria"/>
</dbReference>
<dbReference type="HOGENOM" id="CLU_013734_2_2_6"/>
<dbReference type="Proteomes" id="UP000000812">
    <property type="component" value="Chromosome"/>
</dbReference>
<dbReference type="GO" id="GO:0005737">
    <property type="term" value="C:cytoplasm"/>
    <property type="evidence" value="ECO:0007669"/>
    <property type="project" value="UniProtKB-SubCell"/>
</dbReference>
<dbReference type="GO" id="GO:0030145">
    <property type="term" value="F:manganese ion binding"/>
    <property type="evidence" value="ECO:0007669"/>
    <property type="project" value="UniProtKB-UniRule"/>
</dbReference>
<dbReference type="GO" id="GO:0070006">
    <property type="term" value="F:metalloaminopeptidase activity"/>
    <property type="evidence" value="ECO:0007669"/>
    <property type="project" value="InterPro"/>
</dbReference>
<dbReference type="GO" id="GO:0006508">
    <property type="term" value="P:proteolysis"/>
    <property type="evidence" value="ECO:0007669"/>
    <property type="project" value="UniProtKB-KW"/>
</dbReference>
<dbReference type="CDD" id="cd00433">
    <property type="entry name" value="Peptidase_M17"/>
    <property type="match status" value="1"/>
</dbReference>
<dbReference type="Gene3D" id="3.40.220.10">
    <property type="entry name" value="Leucine Aminopeptidase, subunit E, domain 1"/>
    <property type="match status" value="1"/>
</dbReference>
<dbReference type="Gene3D" id="3.40.630.10">
    <property type="entry name" value="Zn peptidases"/>
    <property type="match status" value="1"/>
</dbReference>
<dbReference type="HAMAP" id="MF_00181">
    <property type="entry name" value="Cytosol_peptidase_M17"/>
    <property type="match status" value="1"/>
</dbReference>
<dbReference type="InterPro" id="IPR011356">
    <property type="entry name" value="Leucine_aapep/pepB"/>
</dbReference>
<dbReference type="InterPro" id="IPR043472">
    <property type="entry name" value="Macro_dom-like"/>
</dbReference>
<dbReference type="InterPro" id="IPR000819">
    <property type="entry name" value="Peptidase_M17_C"/>
</dbReference>
<dbReference type="InterPro" id="IPR023042">
    <property type="entry name" value="Peptidase_M17_leu_NH2_pept"/>
</dbReference>
<dbReference type="InterPro" id="IPR008283">
    <property type="entry name" value="Peptidase_M17_N"/>
</dbReference>
<dbReference type="NCBIfam" id="NF002074">
    <property type="entry name" value="PRK00913.1-4"/>
    <property type="match status" value="1"/>
</dbReference>
<dbReference type="PANTHER" id="PTHR11963:SF23">
    <property type="entry name" value="CYTOSOL AMINOPEPTIDASE"/>
    <property type="match status" value="1"/>
</dbReference>
<dbReference type="PANTHER" id="PTHR11963">
    <property type="entry name" value="LEUCINE AMINOPEPTIDASE-RELATED"/>
    <property type="match status" value="1"/>
</dbReference>
<dbReference type="Pfam" id="PF00883">
    <property type="entry name" value="Peptidase_M17"/>
    <property type="match status" value="1"/>
</dbReference>
<dbReference type="Pfam" id="PF02789">
    <property type="entry name" value="Peptidase_M17_N"/>
    <property type="match status" value="1"/>
</dbReference>
<dbReference type="PRINTS" id="PR00481">
    <property type="entry name" value="LAMNOPPTDASE"/>
</dbReference>
<dbReference type="SUPFAM" id="SSF52949">
    <property type="entry name" value="Macro domain-like"/>
    <property type="match status" value="1"/>
</dbReference>
<dbReference type="SUPFAM" id="SSF53187">
    <property type="entry name" value="Zn-dependent exopeptidases"/>
    <property type="match status" value="1"/>
</dbReference>
<dbReference type="PROSITE" id="PS00631">
    <property type="entry name" value="CYTOSOL_AP"/>
    <property type="match status" value="1"/>
</dbReference>
<comment type="function">
    <text evidence="1">Presumably involved in the processing and regular turnover of intracellular proteins. Catalyzes the removal of unsubstituted N-terminal amino acids from various peptides.</text>
</comment>
<comment type="catalytic activity">
    <reaction evidence="1">
        <text>Release of an N-terminal amino acid, Xaa-|-Yaa-, in which Xaa is preferably Leu, but may be other amino acids including Pro although not Arg or Lys, and Yaa may be Pro. Amino acid amides and methyl esters are also readily hydrolyzed, but rates on arylamides are exceedingly low.</text>
        <dbReference type="EC" id="3.4.11.1"/>
    </reaction>
</comment>
<comment type="catalytic activity">
    <reaction evidence="1">
        <text>Release of an N-terminal amino acid, preferentially leucine, but not glutamic or aspartic acids.</text>
        <dbReference type="EC" id="3.4.11.10"/>
    </reaction>
</comment>
<comment type="cofactor">
    <cofactor evidence="1">
        <name>Mn(2+)</name>
        <dbReference type="ChEBI" id="CHEBI:29035"/>
    </cofactor>
    <text evidence="1">Binds 2 manganese ions per subunit.</text>
</comment>
<comment type="subcellular location">
    <subcellularLocation>
        <location evidence="1">Cytoplasm</location>
    </subcellularLocation>
</comment>
<comment type="similarity">
    <text evidence="1">Belongs to the peptidase M17 family.</text>
</comment>
<evidence type="ECO:0000255" key="1">
    <source>
        <dbReference type="HAMAP-Rule" id="MF_00181"/>
    </source>
</evidence>
<accession>Q9PH08</accession>
<reference key="1">
    <citation type="journal article" date="2000" name="Nature">
        <title>The genome sequence of the plant pathogen Xylella fastidiosa.</title>
        <authorList>
            <person name="Simpson A.J.G."/>
            <person name="Reinach F.C."/>
            <person name="Arruda P."/>
            <person name="Abreu F.A."/>
            <person name="Acencio M."/>
            <person name="Alvarenga R."/>
            <person name="Alves L.M.C."/>
            <person name="Araya J.E."/>
            <person name="Baia G.S."/>
            <person name="Baptista C.S."/>
            <person name="Barros M.H."/>
            <person name="Bonaccorsi E.D."/>
            <person name="Bordin S."/>
            <person name="Bove J.M."/>
            <person name="Briones M.R.S."/>
            <person name="Bueno M.R.P."/>
            <person name="Camargo A.A."/>
            <person name="Camargo L.E.A."/>
            <person name="Carraro D.M."/>
            <person name="Carrer H."/>
            <person name="Colauto N.B."/>
            <person name="Colombo C."/>
            <person name="Costa F.F."/>
            <person name="Costa M.C.R."/>
            <person name="Costa-Neto C.M."/>
            <person name="Coutinho L.L."/>
            <person name="Cristofani M."/>
            <person name="Dias-Neto E."/>
            <person name="Docena C."/>
            <person name="El-Dorry H."/>
            <person name="Facincani A.P."/>
            <person name="Ferreira A.J.S."/>
            <person name="Ferreira V.C.A."/>
            <person name="Ferro J.A."/>
            <person name="Fraga J.S."/>
            <person name="Franca S.C."/>
            <person name="Franco M.C."/>
            <person name="Frohme M."/>
            <person name="Furlan L.R."/>
            <person name="Garnier M."/>
            <person name="Goldman G.H."/>
            <person name="Goldman M.H.S."/>
            <person name="Gomes S.L."/>
            <person name="Gruber A."/>
            <person name="Ho P.L."/>
            <person name="Hoheisel J.D."/>
            <person name="Junqueira M.L."/>
            <person name="Kemper E.L."/>
            <person name="Kitajima J.P."/>
            <person name="Krieger J.E."/>
            <person name="Kuramae E.E."/>
            <person name="Laigret F."/>
            <person name="Lambais M.R."/>
            <person name="Leite L.C.C."/>
            <person name="Lemos E.G.M."/>
            <person name="Lemos M.V.F."/>
            <person name="Lopes S.A."/>
            <person name="Lopes C.R."/>
            <person name="Machado J.A."/>
            <person name="Machado M.A."/>
            <person name="Madeira A.M.B.N."/>
            <person name="Madeira H.M.F."/>
            <person name="Marino C.L."/>
            <person name="Marques M.V."/>
            <person name="Martins E.A.L."/>
            <person name="Martins E.M.F."/>
            <person name="Matsukuma A.Y."/>
            <person name="Menck C.F.M."/>
            <person name="Miracca E.C."/>
            <person name="Miyaki C.Y."/>
            <person name="Monteiro-Vitorello C.B."/>
            <person name="Moon D.H."/>
            <person name="Nagai M.A."/>
            <person name="Nascimento A.L.T.O."/>
            <person name="Netto L.E.S."/>
            <person name="Nhani A. Jr."/>
            <person name="Nobrega F.G."/>
            <person name="Nunes L.R."/>
            <person name="Oliveira M.A."/>
            <person name="de Oliveira M.C."/>
            <person name="de Oliveira R.C."/>
            <person name="Palmieri D.A."/>
            <person name="Paris A."/>
            <person name="Peixoto B.R."/>
            <person name="Pereira G.A.G."/>
            <person name="Pereira H.A. Jr."/>
            <person name="Pesquero J.B."/>
            <person name="Quaggio R.B."/>
            <person name="Roberto P.G."/>
            <person name="Rodrigues V."/>
            <person name="de Rosa A.J.M."/>
            <person name="de Rosa V.E. Jr."/>
            <person name="de Sa R.G."/>
            <person name="Santelli R.V."/>
            <person name="Sawasaki H.E."/>
            <person name="da Silva A.C.R."/>
            <person name="da Silva A.M."/>
            <person name="da Silva F.R."/>
            <person name="Silva W.A. Jr."/>
            <person name="da Silveira J.F."/>
            <person name="Silvestri M.L.Z."/>
            <person name="Siqueira W.J."/>
            <person name="de Souza A.A."/>
            <person name="de Souza A.P."/>
            <person name="Terenzi M.F."/>
            <person name="Truffi D."/>
            <person name="Tsai S.M."/>
            <person name="Tsuhako M.H."/>
            <person name="Vallada H."/>
            <person name="Van Sluys M.A."/>
            <person name="Verjovski-Almeida S."/>
            <person name="Vettore A.L."/>
            <person name="Zago M.A."/>
            <person name="Zatz M."/>
            <person name="Meidanis J."/>
            <person name="Setubal J.C."/>
        </authorList>
    </citation>
    <scope>NUCLEOTIDE SEQUENCE [LARGE SCALE GENOMIC DNA]</scope>
    <source>
        <strain>9a5c</strain>
    </source>
</reference>
<sequence length="491" mass="51723">MALQFQLNQTTPQTVTTDCVIVGIYADKTLSPTAKTLDAASGGRITALTARGDLTGKSGTSALLHDLNGVTAPRVLVVGLGEADKFGPGQYIKAVGDAVRALKDAPVTHALLTLSELPVKDRNAAWNIHQAVIAADHAAYRYTATLGTSRKKAAESGLITLAIHGQESSGLTLGQAIAEGVEYARALGNLPPNICTPVYLAETTAHFAATHPGATCEILDESKMEALGMGALLAVARGSANRPRLIVLKWNGGGDARPYVLVGKGITFDTGGVNLKTQGGIEEMKYDMCGGAAVIGTFVAAVKVRLPLNLIVIVPAVENAIDGNAYRPSDVITSMSGKTIEVGNTDAEGRLILCDALTYAERFKPEALIDVATLTGACMIALGRAATGLMTHHDDLANELLTAGEHVHDRAWRLPLWDEYQNLLDSTFADVYNIGGRWGGAITAGCFLSRFTEGQRWAHLDIAGSASNEGKRGMATGRPVGLLTQWLVDRC</sequence>